<feature type="chain" id="PRO_0000376569" description="Probable cell division protein WhiA">
    <location>
        <begin position="1"/>
        <end position="314"/>
    </location>
</feature>
<feature type="DNA-binding region" description="H-T-H motif" evidence="1">
    <location>
        <begin position="274"/>
        <end position="308"/>
    </location>
</feature>
<proteinExistence type="inferred from homology"/>
<evidence type="ECO:0000255" key="1">
    <source>
        <dbReference type="HAMAP-Rule" id="MF_01420"/>
    </source>
</evidence>
<reference key="1">
    <citation type="journal article" date="2005" name="Proc. Natl. Acad. Sci. U.S.A.">
        <title>Whole genome sequence of Staphylococcus saprophyticus reveals the pathogenesis of uncomplicated urinary tract infection.</title>
        <authorList>
            <person name="Kuroda M."/>
            <person name="Yamashita A."/>
            <person name="Hirakawa H."/>
            <person name="Kumano M."/>
            <person name="Morikawa K."/>
            <person name="Higashide M."/>
            <person name="Maruyama A."/>
            <person name="Inose Y."/>
            <person name="Matoba K."/>
            <person name="Toh H."/>
            <person name="Kuhara S."/>
            <person name="Hattori M."/>
            <person name="Ohta T."/>
        </authorList>
    </citation>
    <scope>NUCLEOTIDE SEQUENCE [LARGE SCALE GENOMIC DNA]</scope>
    <source>
        <strain>ATCC 15305 / DSM 20229 / NCIMB 8711 / NCTC 7292 / S-41</strain>
    </source>
</reference>
<name>WHIA_STAS1</name>
<dbReference type="EMBL" id="AP008934">
    <property type="protein sequence ID" value="BAE19095.1"/>
    <property type="molecule type" value="Genomic_DNA"/>
</dbReference>
<dbReference type="RefSeq" id="WP_011303620.1">
    <property type="nucleotide sequence ID" value="NZ_MTGA01000039.1"/>
</dbReference>
<dbReference type="SMR" id="Q49VW5"/>
<dbReference type="GeneID" id="3616761"/>
<dbReference type="KEGG" id="ssp:SSP1950"/>
<dbReference type="PATRIC" id="fig|342451.11.peg.1943"/>
<dbReference type="eggNOG" id="COG1481">
    <property type="taxonomic scope" value="Bacteria"/>
</dbReference>
<dbReference type="HOGENOM" id="CLU_053282_0_0_9"/>
<dbReference type="OrthoDB" id="401278at2"/>
<dbReference type="Proteomes" id="UP000006371">
    <property type="component" value="Chromosome"/>
</dbReference>
<dbReference type="GO" id="GO:0003677">
    <property type="term" value="F:DNA binding"/>
    <property type="evidence" value="ECO:0007669"/>
    <property type="project" value="UniProtKB-UniRule"/>
</dbReference>
<dbReference type="GO" id="GO:0051301">
    <property type="term" value="P:cell division"/>
    <property type="evidence" value="ECO:0007669"/>
    <property type="project" value="UniProtKB-UniRule"/>
</dbReference>
<dbReference type="GO" id="GO:0043937">
    <property type="term" value="P:regulation of sporulation"/>
    <property type="evidence" value="ECO:0007669"/>
    <property type="project" value="InterPro"/>
</dbReference>
<dbReference type="FunFam" id="3.10.28.10:FF:000002">
    <property type="entry name" value="Probable cell division protein WhiA"/>
    <property type="match status" value="1"/>
</dbReference>
<dbReference type="Gene3D" id="3.10.28.10">
    <property type="entry name" value="Homing endonucleases"/>
    <property type="match status" value="1"/>
</dbReference>
<dbReference type="HAMAP" id="MF_01420">
    <property type="entry name" value="HTH_type_WhiA"/>
    <property type="match status" value="1"/>
</dbReference>
<dbReference type="InterPro" id="IPR027434">
    <property type="entry name" value="Homing_endonucl"/>
</dbReference>
<dbReference type="InterPro" id="IPR018478">
    <property type="entry name" value="Sporu_reg_WhiA_N_dom"/>
</dbReference>
<dbReference type="InterPro" id="IPR003802">
    <property type="entry name" value="Sporulation_regulator_WhiA"/>
</dbReference>
<dbReference type="InterPro" id="IPR023054">
    <property type="entry name" value="Sporulation_regulator_WhiA_C"/>
</dbReference>
<dbReference type="InterPro" id="IPR039518">
    <property type="entry name" value="WhiA_LAGLIDADG_dom"/>
</dbReference>
<dbReference type="NCBIfam" id="TIGR00647">
    <property type="entry name" value="DNA_bind_WhiA"/>
    <property type="match status" value="1"/>
</dbReference>
<dbReference type="PANTHER" id="PTHR37307">
    <property type="entry name" value="CELL DIVISION PROTEIN WHIA-RELATED"/>
    <property type="match status" value="1"/>
</dbReference>
<dbReference type="PANTHER" id="PTHR37307:SF1">
    <property type="entry name" value="CELL DIVISION PROTEIN WHIA-RELATED"/>
    <property type="match status" value="1"/>
</dbReference>
<dbReference type="Pfam" id="PF02650">
    <property type="entry name" value="HTH_WhiA"/>
    <property type="match status" value="1"/>
</dbReference>
<dbReference type="Pfam" id="PF14527">
    <property type="entry name" value="LAGLIDADG_WhiA"/>
    <property type="match status" value="1"/>
</dbReference>
<dbReference type="Pfam" id="PF10298">
    <property type="entry name" value="WhiA_N"/>
    <property type="match status" value="1"/>
</dbReference>
<dbReference type="SUPFAM" id="SSF55608">
    <property type="entry name" value="Homing endonucleases"/>
    <property type="match status" value="1"/>
</dbReference>
<organism>
    <name type="scientific">Staphylococcus saprophyticus subsp. saprophyticus (strain ATCC 15305 / DSM 20229 / NCIMB 8711 / NCTC 7292 / S-41)</name>
    <dbReference type="NCBI Taxonomy" id="342451"/>
    <lineage>
        <taxon>Bacteria</taxon>
        <taxon>Bacillati</taxon>
        <taxon>Bacillota</taxon>
        <taxon>Bacilli</taxon>
        <taxon>Bacillales</taxon>
        <taxon>Staphylococcaceae</taxon>
        <taxon>Staphylococcus</taxon>
    </lineage>
</organism>
<comment type="function">
    <text evidence="1">Involved in cell division and chromosome segregation.</text>
</comment>
<comment type="similarity">
    <text evidence="1">Belongs to the WhiA family.</text>
</comment>
<keyword id="KW-0131">Cell cycle</keyword>
<keyword id="KW-0132">Cell division</keyword>
<keyword id="KW-0238">DNA-binding</keyword>
<keyword id="KW-1185">Reference proteome</keyword>
<gene>
    <name evidence="1" type="primary">whiA</name>
    <name type="ordered locus">SSP1950</name>
</gene>
<sequence>MSFASDMKNELTRIEVDEENAKAELSALIRMNGALSLSNQQFVINVQTENATTARRIYSLIKKVFNVEVELLVRKKMKLKKNNIYICRIKARAREILDDLGILKNGVFTHEIDETMIHDDEMRRSYLRGAFLAGGSVNNPETSSYHLEVFSLYEDHSEGITQLMNAYELNAKHLERKKGSIAYLKEAEKISDFLSLIGGYQALLKFEDVRIVRDMRNSVNRLVNCETANLNKTVSAAMKHVESIHLIDKEIGLDNLPDRLREIAKLRIEHQEVSLKELGEMMSTGKISKSGVNHRLRKLNEMADKLRSGEPIEL</sequence>
<protein>
    <recommendedName>
        <fullName evidence="1">Probable cell division protein WhiA</fullName>
    </recommendedName>
</protein>
<accession>Q49VW5</accession>